<reference key="1">
    <citation type="journal article" date="1998" name="J. Bacteriol.">
        <title>Gas vesicle genes identified in Bacillus megaterium and functional expression in Escherichia coli.</title>
        <authorList>
            <person name="Li N."/>
            <person name="Cannon M.C."/>
        </authorList>
    </citation>
    <scope>NUCLEOTIDE SEQUENCE [GENOMIC DNA]</scope>
    <scope>FUNCTION</scope>
    <scope>EXPRESSION IN E.COLI</scope>
    <scope>PROBABLE SUBCELLULAR LOCATION</scope>
    <scope>DISRUPTION PHENOTYPE</scope>
    <source>
        <strain>ATCC 35985 / VT1660</strain>
    </source>
</reference>
<reference key="2">
    <citation type="journal article" date="2018" name="AIChE J.">
        <title>Recombinantly Expressed Gas Vesicles as Nanoscale Contrast Agents for Ultrasound and Hyperpolarized MRI.</title>
        <authorList>
            <person name="Farhadi A."/>
            <person name="Ho G."/>
            <person name="Kunth M."/>
            <person name="Ling B."/>
            <person name="Lakshmanan A."/>
            <person name="Lu G."/>
            <person name="Bourdeau R.W."/>
            <person name="Schroeder L."/>
            <person name="Shapiro M.G."/>
        </authorList>
    </citation>
    <scope>BIOTECHNOLOGY</scope>
    <source>
        <strain>ATCC 35985 / VT1660</strain>
    </source>
</reference>
<comment type="function">
    <text evidence="1">Gas vesicles are hollow, gas filled proteinaceous nanostructures found in some microorganisms. During planktonic growth they allow positioning of the organism at a favorable depth for light or nutrient acquisition. GvpA forms the protein shell.</text>
</comment>
<comment type="function">
    <text evidence="3">It is not clear if the 2 type A proteins in this organism are functionally redundant (PubMed:9573198).</text>
</comment>
<comment type="function">
    <text evidence="3">When a minimal gvp locus (gvpA2-gvpR-gvpN-gvpF-gvpG-gvpL-gvpS-gvpK-gvpJ-gvpT-gvpU, called pNL29) is expressed in E.coli gas vesicles are made.</text>
</comment>
<comment type="subunit">
    <text evidence="1">The gas vesicle shell is 2 nm thick and consists of a single layer of this protein. It forms helical ribs nearly perpendicular to the long axis of the vesicle.</text>
</comment>
<comment type="subcellular location">
    <subcellularLocation>
        <location evidence="1 5">Gas vesicle shell</location>
    </subcellularLocation>
</comment>
<comment type="disruption phenotype">
    <text evidence="3">Required to make gas vesicles in E.coli in the absence of GVP 1.</text>
</comment>
<comment type="biotechnology">
    <text evidence="2">The minimal pNL29 gvp locus overexpressed in E.coli can be filled with Xe and used as a contrast agent for ultrasound and magnetic resonance imaging.</text>
</comment>
<comment type="similarity">
    <text evidence="1">Belongs to the gas vesicle GvpA family.</text>
</comment>
<dbReference type="EMBL" id="AF053765">
    <property type="protein sequence ID" value="AAC38416.1"/>
    <property type="molecule type" value="Genomic_DNA"/>
</dbReference>
<dbReference type="SMR" id="O68677"/>
<dbReference type="OMA" id="PERGQNT"/>
<dbReference type="GO" id="GO:0033172">
    <property type="term" value="C:gas vesicle shell"/>
    <property type="evidence" value="ECO:0007669"/>
    <property type="project" value="UniProtKB-UniRule"/>
</dbReference>
<dbReference type="GO" id="GO:0012506">
    <property type="term" value="C:vesicle membrane"/>
    <property type="evidence" value="ECO:0007669"/>
    <property type="project" value="InterPro"/>
</dbReference>
<dbReference type="GO" id="GO:0005198">
    <property type="term" value="F:structural molecule activity"/>
    <property type="evidence" value="ECO:0007669"/>
    <property type="project" value="InterPro"/>
</dbReference>
<dbReference type="HAMAP" id="MF_00576">
    <property type="entry name" value="Gas_vesicle_A"/>
    <property type="match status" value="1"/>
</dbReference>
<dbReference type="InterPro" id="IPR000638">
    <property type="entry name" value="Gas-vesicle_GvpA-like"/>
</dbReference>
<dbReference type="InterPro" id="IPR047870">
    <property type="entry name" value="Gas_vesicle_GvpA"/>
</dbReference>
<dbReference type="InterPro" id="IPR050530">
    <property type="entry name" value="GvpA"/>
</dbReference>
<dbReference type="InterPro" id="IPR018493">
    <property type="entry name" value="GvpA-like_CS"/>
</dbReference>
<dbReference type="NCBIfam" id="NF006874">
    <property type="entry name" value="PRK09371.1"/>
    <property type="match status" value="1"/>
</dbReference>
<dbReference type="PANTHER" id="PTHR35344:SF4">
    <property type="entry name" value="GAS VESICLE PROTEIN A1"/>
    <property type="match status" value="1"/>
</dbReference>
<dbReference type="PANTHER" id="PTHR35344">
    <property type="entry name" value="GAS VESICLE STRUCTURAL PROTEIN 2-RELATED"/>
    <property type="match status" value="1"/>
</dbReference>
<dbReference type="Pfam" id="PF00741">
    <property type="entry name" value="Gas_vesicle"/>
    <property type="match status" value="1"/>
</dbReference>
<dbReference type="PROSITE" id="PS00234">
    <property type="entry name" value="GAS_VESICLE_A_1"/>
    <property type="match status" value="1"/>
</dbReference>
<dbReference type="PROSITE" id="PS00669">
    <property type="entry name" value="GAS_VESICLE_A_2"/>
    <property type="match status" value="1"/>
</dbReference>
<feature type="chain" id="PRO_0000199982" description="Gas vesicle protein A2">
    <location>
        <begin position="1"/>
        <end position="88"/>
    </location>
</feature>
<sequence length="88" mass="9618">MSIQKSTNSSSLAEVIDRILDKGIVIDAFARVSVVGIEILTIEARVVIASVDTWLRYAEAVGLLRDDVEENGLPERSNSSEGQPRFSI</sequence>
<protein>
    <recommendedName>
        <fullName evidence="1">Gas vesicle protein A2</fullName>
        <shortName evidence="1">GvpA2</shortName>
    </recommendedName>
    <alternativeName>
        <fullName evidence="4">Gas vesicle structural protein B</fullName>
        <shortName evidence="4">GvpB</shortName>
    </alternativeName>
</protein>
<gene>
    <name evidence="1" type="primary">gvpA2</name>
    <name evidence="4" type="synonym">gvpB</name>
</gene>
<proteinExistence type="evidence at protein level"/>
<organism>
    <name type="scientific">Priestia megaterium</name>
    <name type="common">Bacillus megaterium</name>
    <dbReference type="NCBI Taxonomy" id="1404"/>
    <lineage>
        <taxon>Bacteria</taxon>
        <taxon>Bacillati</taxon>
        <taxon>Bacillota</taxon>
        <taxon>Bacilli</taxon>
        <taxon>Bacillales</taxon>
        <taxon>Bacillaceae</taxon>
        <taxon>Priestia</taxon>
    </lineage>
</organism>
<accession>O68677</accession>
<keyword id="KW-0304">Gas vesicle</keyword>
<name>GVPA2_PRIMG</name>
<evidence type="ECO:0000255" key="1">
    <source>
        <dbReference type="HAMAP-Rule" id="MF_00576"/>
    </source>
</evidence>
<evidence type="ECO:0000269" key="2">
    <source>
    </source>
</evidence>
<evidence type="ECO:0000269" key="3">
    <source>
    </source>
</evidence>
<evidence type="ECO:0000303" key="4">
    <source>
    </source>
</evidence>
<evidence type="ECO:0000305" key="5">
    <source>
    </source>
</evidence>